<organism>
    <name type="scientific">Geobacillus kaustophilus (strain HTA426)</name>
    <dbReference type="NCBI Taxonomy" id="235909"/>
    <lineage>
        <taxon>Bacteria</taxon>
        <taxon>Bacillati</taxon>
        <taxon>Bacillota</taxon>
        <taxon>Bacilli</taxon>
        <taxon>Bacillales</taxon>
        <taxon>Anoxybacillaceae</taxon>
        <taxon>Geobacillus</taxon>
        <taxon>Geobacillus thermoleovorans group</taxon>
    </lineage>
</organism>
<evidence type="ECO:0000255" key="1">
    <source>
        <dbReference type="HAMAP-Rule" id="MF_00275"/>
    </source>
</evidence>
<gene>
    <name evidence="1" type="primary">kdpA</name>
    <name type="ordered locus">GK3248</name>
</gene>
<keyword id="KW-1003">Cell membrane</keyword>
<keyword id="KW-0406">Ion transport</keyword>
<keyword id="KW-0472">Membrane</keyword>
<keyword id="KW-0630">Potassium</keyword>
<keyword id="KW-0633">Potassium transport</keyword>
<keyword id="KW-1185">Reference proteome</keyword>
<keyword id="KW-0812">Transmembrane</keyword>
<keyword id="KW-1133">Transmembrane helix</keyword>
<keyword id="KW-0813">Transport</keyword>
<dbReference type="EMBL" id="BA000043">
    <property type="protein sequence ID" value="BAD77533.1"/>
    <property type="molecule type" value="Genomic_DNA"/>
</dbReference>
<dbReference type="RefSeq" id="WP_011232718.1">
    <property type="nucleotide sequence ID" value="NC_006510.1"/>
</dbReference>
<dbReference type="SMR" id="Q5KUV3"/>
<dbReference type="STRING" id="235909.GK3248"/>
<dbReference type="KEGG" id="gka:GK3248"/>
<dbReference type="eggNOG" id="COG2060">
    <property type="taxonomic scope" value="Bacteria"/>
</dbReference>
<dbReference type="HOGENOM" id="CLU_018614_3_0_9"/>
<dbReference type="Proteomes" id="UP000001172">
    <property type="component" value="Chromosome"/>
</dbReference>
<dbReference type="GO" id="GO:0005886">
    <property type="term" value="C:plasma membrane"/>
    <property type="evidence" value="ECO:0007669"/>
    <property type="project" value="UniProtKB-SubCell"/>
</dbReference>
<dbReference type="GO" id="GO:0008556">
    <property type="term" value="F:P-type potassium transmembrane transporter activity"/>
    <property type="evidence" value="ECO:0007669"/>
    <property type="project" value="InterPro"/>
</dbReference>
<dbReference type="GO" id="GO:0030955">
    <property type="term" value="F:potassium ion binding"/>
    <property type="evidence" value="ECO:0007669"/>
    <property type="project" value="UniProtKB-UniRule"/>
</dbReference>
<dbReference type="HAMAP" id="MF_00275">
    <property type="entry name" value="KdpA"/>
    <property type="match status" value="1"/>
</dbReference>
<dbReference type="InterPro" id="IPR004623">
    <property type="entry name" value="KdpA"/>
</dbReference>
<dbReference type="NCBIfam" id="TIGR00680">
    <property type="entry name" value="kdpA"/>
    <property type="match status" value="1"/>
</dbReference>
<dbReference type="PANTHER" id="PTHR30607">
    <property type="entry name" value="POTASSIUM-TRANSPORTING ATPASE A CHAIN"/>
    <property type="match status" value="1"/>
</dbReference>
<dbReference type="PANTHER" id="PTHR30607:SF2">
    <property type="entry name" value="POTASSIUM-TRANSPORTING ATPASE POTASSIUM-BINDING SUBUNIT"/>
    <property type="match status" value="1"/>
</dbReference>
<dbReference type="Pfam" id="PF03814">
    <property type="entry name" value="KdpA"/>
    <property type="match status" value="1"/>
</dbReference>
<dbReference type="PIRSF" id="PIRSF001294">
    <property type="entry name" value="K_ATPaseA"/>
    <property type="match status" value="1"/>
</dbReference>
<comment type="function">
    <text evidence="1">Part of the high-affinity ATP-driven potassium transport (or Kdp) system, which catalyzes the hydrolysis of ATP coupled with the electrogenic transport of potassium into the cytoplasm. This subunit binds the extracellular potassium ions and delivers the ions to the membrane domain of KdpB through an intramembrane tunnel.</text>
</comment>
<comment type="subunit">
    <text evidence="1">The system is composed of three essential subunits: KdpA, KdpB and KdpC.</text>
</comment>
<comment type="subcellular location">
    <subcellularLocation>
        <location evidence="1">Cell membrane</location>
        <topology evidence="1">Multi-pass membrane protein</topology>
    </subcellularLocation>
</comment>
<comment type="similarity">
    <text evidence="1">Belongs to the KdpA family.</text>
</comment>
<proteinExistence type="inferred from homology"/>
<name>KDPA_GEOKA</name>
<protein>
    <recommendedName>
        <fullName evidence="1">Potassium-transporting ATPase potassium-binding subunit</fullName>
    </recommendedName>
    <alternativeName>
        <fullName evidence="1">ATP phosphohydrolase [potassium-transporting] A chain</fullName>
    </alternativeName>
    <alternativeName>
        <fullName evidence="1">Potassium-binding and translocating subunit A</fullName>
    </alternativeName>
    <alternativeName>
        <fullName evidence="1">Potassium-translocating ATPase A chain</fullName>
    </alternativeName>
</protein>
<feature type="chain" id="PRO_0000166498" description="Potassium-transporting ATPase potassium-binding subunit">
    <location>
        <begin position="1"/>
        <end position="560"/>
    </location>
</feature>
<feature type="transmembrane region" description="Helical" evidence="1">
    <location>
        <begin position="11"/>
        <end position="31"/>
    </location>
</feature>
<feature type="transmembrane region" description="Helical" evidence="1">
    <location>
        <begin position="63"/>
        <end position="83"/>
    </location>
</feature>
<feature type="transmembrane region" description="Helical" evidence="1">
    <location>
        <begin position="134"/>
        <end position="154"/>
    </location>
</feature>
<feature type="transmembrane region" description="Helical" evidence="1">
    <location>
        <begin position="179"/>
        <end position="199"/>
    </location>
</feature>
<feature type="transmembrane region" description="Helical" evidence="1">
    <location>
        <begin position="254"/>
        <end position="274"/>
    </location>
</feature>
<feature type="transmembrane region" description="Helical" evidence="1">
    <location>
        <begin position="282"/>
        <end position="302"/>
    </location>
</feature>
<feature type="transmembrane region" description="Helical" evidence="1">
    <location>
        <begin position="329"/>
        <end position="349"/>
    </location>
</feature>
<feature type="transmembrane region" description="Helical" evidence="1">
    <location>
        <begin position="356"/>
        <end position="376"/>
    </location>
</feature>
<feature type="transmembrane region" description="Helical" evidence="1">
    <location>
        <begin position="379"/>
        <end position="399"/>
    </location>
</feature>
<feature type="transmembrane region" description="Helical" evidence="1">
    <location>
        <begin position="417"/>
        <end position="437"/>
    </location>
</feature>
<feature type="transmembrane region" description="Helical" evidence="1">
    <location>
        <begin position="488"/>
        <end position="508"/>
    </location>
</feature>
<feature type="transmembrane region" description="Helical" evidence="1">
    <location>
        <begin position="530"/>
        <end position="550"/>
    </location>
</feature>
<sequence>MWHVFSQYTLIFLLLIVIAVPLGKYLYVAFFEKGKIDRFFSPIEAVIYRLSGIRSLEEMTWKSYCTALLIVNAALLGISYGLLRIQHYLPLNGAKVENMEPTLTFNTVVSFMTNTNLQHYSGESGLSILSQMLFVTMMMFTSAATGLTVATALIRALSKKGKTIGNFYQDFVRANVRVLLPLSVIVTILLVAFGVPQTFLARMAVSTLEGGTQTLALGPVASLESIKHLGTNGGGFFGANSSHPFENPHPFTNVIEMLSMWCIPAALPFTYGHAVKNRKQGWVLFATMFVLFVMMLGVVYNAEQSGNPLVGKSGFAADQGNMEGKEVRFGIPLSSLFTAITTAATTGSVNNMHDSLTPIGGLVPLALMMLNNVFGGDGVGFVNIMMYAMIAVFLSGLMVGRTPEFLGRKIEPKEMKLIVIALLLHPLIILAPSAIALMTHMGTEAISNPGFHGISQVVYEYTSSAANNGSGFEGLKDNTAFWNISTGVVMLLGRYVSIIAMLAVAGSLVGKQPVPETIGTFRTDTATFGVILFGTVFIIGALTFFPVLILGPVAEYLTIR</sequence>
<reference key="1">
    <citation type="journal article" date="2004" name="Nucleic Acids Res.">
        <title>Thermoadaptation trait revealed by the genome sequence of thermophilic Geobacillus kaustophilus.</title>
        <authorList>
            <person name="Takami H."/>
            <person name="Takaki Y."/>
            <person name="Chee G.-J."/>
            <person name="Nishi S."/>
            <person name="Shimamura S."/>
            <person name="Suzuki H."/>
            <person name="Matsui S."/>
            <person name="Uchiyama I."/>
        </authorList>
    </citation>
    <scope>NUCLEOTIDE SEQUENCE [LARGE SCALE GENOMIC DNA]</scope>
    <source>
        <strain>HTA426</strain>
    </source>
</reference>
<accession>Q5KUV3</accession>